<dbReference type="EMBL" id="BA000030">
    <property type="protein sequence ID" value="BAC72670.1"/>
    <property type="molecule type" value="Genomic_DNA"/>
</dbReference>
<dbReference type="RefSeq" id="WP_010986364.1">
    <property type="nucleotide sequence ID" value="NZ_JZJK01000077.1"/>
</dbReference>
<dbReference type="SMR" id="Q82DL8"/>
<dbReference type="GeneID" id="41542041"/>
<dbReference type="KEGG" id="sma:SAVERM_4958"/>
<dbReference type="eggNOG" id="COG0103">
    <property type="taxonomic scope" value="Bacteria"/>
</dbReference>
<dbReference type="HOGENOM" id="CLU_046483_2_0_11"/>
<dbReference type="OrthoDB" id="9803965at2"/>
<dbReference type="Proteomes" id="UP000000428">
    <property type="component" value="Chromosome"/>
</dbReference>
<dbReference type="GO" id="GO:0005737">
    <property type="term" value="C:cytoplasm"/>
    <property type="evidence" value="ECO:0007669"/>
    <property type="project" value="UniProtKB-ARBA"/>
</dbReference>
<dbReference type="GO" id="GO:0015935">
    <property type="term" value="C:small ribosomal subunit"/>
    <property type="evidence" value="ECO:0007669"/>
    <property type="project" value="TreeGrafter"/>
</dbReference>
<dbReference type="GO" id="GO:0003723">
    <property type="term" value="F:RNA binding"/>
    <property type="evidence" value="ECO:0007669"/>
    <property type="project" value="TreeGrafter"/>
</dbReference>
<dbReference type="GO" id="GO:0003735">
    <property type="term" value="F:structural constituent of ribosome"/>
    <property type="evidence" value="ECO:0007669"/>
    <property type="project" value="InterPro"/>
</dbReference>
<dbReference type="GO" id="GO:0006412">
    <property type="term" value="P:translation"/>
    <property type="evidence" value="ECO:0007669"/>
    <property type="project" value="UniProtKB-UniRule"/>
</dbReference>
<dbReference type="FunFam" id="3.30.230.10:FF:000001">
    <property type="entry name" value="30S ribosomal protein S9"/>
    <property type="match status" value="1"/>
</dbReference>
<dbReference type="Gene3D" id="3.30.230.10">
    <property type="match status" value="1"/>
</dbReference>
<dbReference type="HAMAP" id="MF_00532_B">
    <property type="entry name" value="Ribosomal_uS9_B"/>
    <property type="match status" value="1"/>
</dbReference>
<dbReference type="InterPro" id="IPR020568">
    <property type="entry name" value="Ribosomal_Su5_D2-typ_SF"/>
</dbReference>
<dbReference type="InterPro" id="IPR000754">
    <property type="entry name" value="Ribosomal_uS9"/>
</dbReference>
<dbReference type="InterPro" id="IPR023035">
    <property type="entry name" value="Ribosomal_uS9_bac/plastid"/>
</dbReference>
<dbReference type="InterPro" id="IPR020574">
    <property type="entry name" value="Ribosomal_uS9_CS"/>
</dbReference>
<dbReference type="InterPro" id="IPR014721">
    <property type="entry name" value="Ribsml_uS5_D2-typ_fold_subgr"/>
</dbReference>
<dbReference type="NCBIfam" id="NF001099">
    <property type="entry name" value="PRK00132.1"/>
    <property type="match status" value="1"/>
</dbReference>
<dbReference type="PANTHER" id="PTHR21569">
    <property type="entry name" value="RIBOSOMAL PROTEIN S9"/>
    <property type="match status" value="1"/>
</dbReference>
<dbReference type="PANTHER" id="PTHR21569:SF1">
    <property type="entry name" value="SMALL RIBOSOMAL SUBUNIT PROTEIN US9M"/>
    <property type="match status" value="1"/>
</dbReference>
<dbReference type="Pfam" id="PF00380">
    <property type="entry name" value="Ribosomal_S9"/>
    <property type="match status" value="1"/>
</dbReference>
<dbReference type="SUPFAM" id="SSF54211">
    <property type="entry name" value="Ribosomal protein S5 domain 2-like"/>
    <property type="match status" value="1"/>
</dbReference>
<dbReference type="PROSITE" id="PS00360">
    <property type="entry name" value="RIBOSOMAL_S9"/>
    <property type="match status" value="1"/>
</dbReference>
<organism>
    <name type="scientific">Streptomyces avermitilis (strain ATCC 31267 / DSM 46492 / JCM 5070 / NBRC 14893 / NCIMB 12804 / NRRL 8165 / MA-4680)</name>
    <dbReference type="NCBI Taxonomy" id="227882"/>
    <lineage>
        <taxon>Bacteria</taxon>
        <taxon>Bacillati</taxon>
        <taxon>Actinomycetota</taxon>
        <taxon>Actinomycetes</taxon>
        <taxon>Kitasatosporales</taxon>
        <taxon>Streptomycetaceae</taxon>
        <taxon>Streptomyces</taxon>
    </lineage>
</organism>
<feature type="chain" id="PRO_0000111417" description="Small ribosomal subunit protein uS9">
    <location>
        <begin position="1"/>
        <end position="173"/>
    </location>
</feature>
<feature type="region of interest" description="Disordered" evidence="2">
    <location>
        <begin position="20"/>
        <end position="53"/>
    </location>
</feature>
<evidence type="ECO:0000255" key="1">
    <source>
        <dbReference type="HAMAP-Rule" id="MF_00532"/>
    </source>
</evidence>
<evidence type="ECO:0000256" key="2">
    <source>
        <dbReference type="SAM" id="MobiDB-lite"/>
    </source>
</evidence>
<evidence type="ECO:0000305" key="3"/>
<name>RS9_STRAW</name>
<proteinExistence type="inferred from homology"/>
<keyword id="KW-1185">Reference proteome</keyword>
<keyword id="KW-0687">Ribonucleoprotein</keyword>
<keyword id="KW-0689">Ribosomal protein</keyword>
<accession>Q82DL8</accession>
<protein>
    <recommendedName>
        <fullName evidence="1">Small ribosomal subunit protein uS9</fullName>
    </recommendedName>
    <alternativeName>
        <fullName evidence="3">30S ribosomal protein S9</fullName>
    </alternativeName>
</protein>
<comment type="similarity">
    <text evidence="1">Belongs to the universal ribosomal protein uS9 family.</text>
</comment>
<gene>
    <name evidence="1" type="primary">rpsI</name>
    <name type="ordered locus">SAV_4958</name>
</gene>
<sequence length="173" mass="19024">MAETTVEQPVEETEVVDIESYTTESEVPVEGEYTSESVASRFGEPQPAAGLGRRKNAIARVRIVPGTGKWKINGRTLEDYFPNKVHQQEVNEPFKVLELEGRYDVIARISGGGVSGQAGALRLGVARALNEADVDNNRGALKKAGFLKRDDRAVERKKAGLKKARKAPQYSKR</sequence>
<reference key="1">
    <citation type="journal article" date="2001" name="Proc. Natl. Acad. Sci. U.S.A.">
        <title>Genome sequence of an industrial microorganism Streptomyces avermitilis: deducing the ability of producing secondary metabolites.</title>
        <authorList>
            <person name="Omura S."/>
            <person name="Ikeda H."/>
            <person name="Ishikawa J."/>
            <person name="Hanamoto A."/>
            <person name="Takahashi C."/>
            <person name="Shinose M."/>
            <person name="Takahashi Y."/>
            <person name="Horikawa H."/>
            <person name="Nakazawa H."/>
            <person name="Osonoe T."/>
            <person name="Kikuchi H."/>
            <person name="Shiba T."/>
            <person name="Sakaki Y."/>
            <person name="Hattori M."/>
        </authorList>
    </citation>
    <scope>NUCLEOTIDE SEQUENCE [LARGE SCALE GENOMIC DNA]</scope>
    <source>
        <strain>ATCC 31267 / DSM 46492 / JCM 5070 / NBRC 14893 / NCIMB 12804 / NRRL 8165 / MA-4680</strain>
    </source>
</reference>
<reference key="2">
    <citation type="journal article" date="2003" name="Nat. Biotechnol.">
        <title>Complete genome sequence and comparative analysis of the industrial microorganism Streptomyces avermitilis.</title>
        <authorList>
            <person name="Ikeda H."/>
            <person name="Ishikawa J."/>
            <person name="Hanamoto A."/>
            <person name="Shinose M."/>
            <person name="Kikuchi H."/>
            <person name="Shiba T."/>
            <person name="Sakaki Y."/>
            <person name="Hattori M."/>
            <person name="Omura S."/>
        </authorList>
    </citation>
    <scope>NUCLEOTIDE SEQUENCE [LARGE SCALE GENOMIC DNA]</scope>
    <source>
        <strain>ATCC 31267 / DSM 46492 / JCM 5070 / NBRC 14893 / NCIMB 12804 / NRRL 8165 / MA-4680</strain>
    </source>
</reference>